<accession>Q9VPD2</accession>
<dbReference type="EMBL" id="AE014296">
    <property type="protein sequence ID" value="AAF51623.1"/>
    <property type="molecule type" value="Genomic_DNA"/>
</dbReference>
<dbReference type="EMBL" id="BT012307">
    <property type="protein sequence ID" value="AAS77432.1"/>
    <property type="molecule type" value="mRNA"/>
</dbReference>
<dbReference type="RefSeq" id="NP_649243.1">
    <property type="nucleotide sequence ID" value="NM_140986.3"/>
</dbReference>
<dbReference type="SMR" id="Q9VPD2"/>
<dbReference type="BioGRID" id="65539">
    <property type="interactions" value="4"/>
</dbReference>
<dbReference type="FunCoup" id="Q9VPD2">
    <property type="interactions" value="254"/>
</dbReference>
<dbReference type="IntAct" id="Q9VPD2">
    <property type="interactions" value="15"/>
</dbReference>
<dbReference type="STRING" id="7227.FBpp0077868"/>
<dbReference type="PaxDb" id="7227-FBpp0077868"/>
<dbReference type="DNASU" id="40282"/>
<dbReference type="EnsemblMetazoa" id="FBtr0078210">
    <property type="protein sequence ID" value="FBpp0077868"/>
    <property type="gene ID" value="FBgn0037011"/>
</dbReference>
<dbReference type="GeneID" id="40282"/>
<dbReference type="KEGG" id="dme:Dmel_CG4858"/>
<dbReference type="UCSC" id="CG4858-RA">
    <property type="organism name" value="d. melanogaster"/>
</dbReference>
<dbReference type="AGR" id="FB:FBgn0037011"/>
<dbReference type="CTD" id="10101"/>
<dbReference type="FlyBase" id="FBgn0037011">
    <property type="gene designation" value="Nubp2"/>
</dbReference>
<dbReference type="VEuPathDB" id="VectorBase:FBgn0037011"/>
<dbReference type="eggNOG" id="KOG3022">
    <property type="taxonomic scope" value="Eukaryota"/>
</dbReference>
<dbReference type="GeneTree" id="ENSGT00950000183193"/>
<dbReference type="HOGENOM" id="CLU_024839_0_1_1"/>
<dbReference type="InParanoid" id="Q9VPD2"/>
<dbReference type="OMA" id="WIPVFAD"/>
<dbReference type="OrthoDB" id="1741334at2759"/>
<dbReference type="PhylomeDB" id="Q9VPD2"/>
<dbReference type="BioGRID-ORCS" id="40282">
    <property type="hits" value="0 hits in 1 CRISPR screen"/>
</dbReference>
<dbReference type="GenomeRNAi" id="40282"/>
<dbReference type="PRO" id="PR:Q9VPD2"/>
<dbReference type="Proteomes" id="UP000000803">
    <property type="component" value="Chromosome 3L"/>
</dbReference>
<dbReference type="Bgee" id="FBgn0037011">
    <property type="expression patterns" value="Expressed in adult oenocyte (Drosophila) in adult thorax and 122 other cell types or tissues"/>
</dbReference>
<dbReference type="GO" id="GO:0005829">
    <property type="term" value="C:cytosol"/>
    <property type="evidence" value="ECO:0000318"/>
    <property type="project" value="GO_Central"/>
</dbReference>
<dbReference type="GO" id="GO:1904564">
    <property type="term" value="C:cytosolic [4Fe-4S] assembly scaffold complex"/>
    <property type="evidence" value="ECO:0000250"/>
    <property type="project" value="FlyBase"/>
</dbReference>
<dbReference type="GO" id="GO:0051539">
    <property type="term" value="F:4 iron, 4 sulfur cluster binding"/>
    <property type="evidence" value="ECO:0007669"/>
    <property type="project" value="UniProtKB-UniRule"/>
</dbReference>
<dbReference type="GO" id="GO:0005524">
    <property type="term" value="F:ATP binding"/>
    <property type="evidence" value="ECO:0007669"/>
    <property type="project" value="UniProtKB-KW"/>
</dbReference>
<dbReference type="GO" id="GO:0140663">
    <property type="term" value="F:ATP-dependent FeS chaperone activity"/>
    <property type="evidence" value="ECO:0007669"/>
    <property type="project" value="InterPro"/>
</dbReference>
<dbReference type="GO" id="GO:0051536">
    <property type="term" value="F:iron-sulfur cluster binding"/>
    <property type="evidence" value="ECO:0000318"/>
    <property type="project" value="GO_Central"/>
</dbReference>
<dbReference type="GO" id="GO:0046872">
    <property type="term" value="F:metal ion binding"/>
    <property type="evidence" value="ECO:0007669"/>
    <property type="project" value="UniProtKB-KW"/>
</dbReference>
<dbReference type="GO" id="GO:0016226">
    <property type="term" value="P:iron-sulfur cluster assembly"/>
    <property type="evidence" value="ECO:0000318"/>
    <property type="project" value="GO_Central"/>
</dbReference>
<dbReference type="CDD" id="cd02037">
    <property type="entry name" value="Mrp_NBP35"/>
    <property type="match status" value="1"/>
</dbReference>
<dbReference type="FunFam" id="3.40.50.300:FF:000796">
    <property type="entry name" value="Cytosolic Fe-S cluster assembly factor NUBP2"/>
    <property type="match status" value="1"/>
</dbReference>
<dbReference type="Gene3D" id="3.40.50.300">
    <property type="entry name" value="P-loop containing nucleotide triphosphate hydrolases"/>
    <property type="match status" value="1"/>
</dbReference>
<dbReference type="HAMAP" id="MF_02040">
    <property type="entry name" value="Mrp_NBP35"/>
    <property type="match status" value="1"/>
</dbReference>
<dbReference type="HAMAP" id="MF_03039">
    <property type="entry name" value="NUBP2"/>
    <property type="match status" value="1"/>
</dbReference>
<dbReference type="InterPro" id="IPR000808">
    <property type="entry name" value="Mrp-like_CS"/>
</dbReference>
<dbReference type="InterPro" id="IPR019591">
    <property type="entry name" value="Mrp/NBP35_ATP-bd"/>
</dbReference>
<dbReference type="InterPro" id="IPR028600">
    <property type="entry name" value="NUBP2/Cfd1_eukaryotes"/>
</dbReference>
<dbReference type="InterPro" id="IPR027417">
    <property type="entry name" value="P-loop_NTPase"/>
</dbReference>
<dbReference type="InterPro" id="IPR033756">
    <property type="entry name" value="YlxH/NBP35"/>
</dbReference>
<dbReference type="PANTHER" id="PTHR23264:SF19">
    <property type="entry name" value="CYTOSOLIC FE-S CLUSTER ASSEMBLY FACTOR NUBP2"/>
    <property type="match status" value="1"/>
</dbReference>
<dbReference type="PANTHER" id="PTHR23264">
    <property type="entry name" value="NUCLEOTIDE-BINDING PROTEIN NBP35 YEAST -RELATED"/>
    <property type="match status" value="1"/>
</dbReference>
<dbReference type="Pfam" id="PF10609">
    <property type="entry name" value="ParA"/>
    <property type="match status" value="1"/>
</dbReference>
<dbReference type="SUPFAM" id="SSF52540">
    <property type="entry name" value="P-loop containing nucleoside triphosphate hydrolases"/>
    <property type="match status" value="1"/>
</dbReference>
<dbReference type="PROSITE" id="PS01215">
    <property type="entry name" value="MRP"/>
    <property type="match status" value="1"/>
</dbReference>
<evidence type="ECO:0000255" key="1">
    <source>
        <dbReference type="HAMAP-Rule" id="MF_03039"/>
    </source>
</evidence>
<evidence type="ECO:0000312" key="2">
    <source>
        <dbReference type="FlyBase" id="FBgn0037011"/>
    </source>
</evidence>
<gene>
    <name evidence="2" type="primary">Nubp2</name>
    <name evidence="2" type="ORF">CG4858</name>
</gene>
<protein>
    <recommendedName>
        <fullName evidence="1">Cytosolic Fe-S cluster assembly factor Nubp2 homolog</fullName>
    </recommendedName>
</protein>
<name>NUBP2_DROME</name>
<keyword id="KW-0004">4Fe-4S</keyword>
<keyword id="KW-0067">ATP-binding</keyword>
<keyword id="KW-0963">Cytoplasm</keyword>
<keyword id="KW-0408">Iron</keyword>
<keyword id="KW-0411">Iron-sulfur</keyword>
<keyword id="KW-0479">Metal-binding</keyword>
<keyword id="KW-0547">Nucleotide-binding</keyword>
<keyword id="KW-1185">Reference proteome</keyword>
<feature type="chain" id="PRO_0000382711" description="Cytosolic Fe-S cluster assembly factor Nubp2 homolog">
    <location>
        <begin position="1"/>
        <end position="260"/>
    </location>
</feature>
<feature type="binding site" evidence="1">
    <location>
        <begin position="14"/>
        <end position="21"/>
    </location>
    <ligand>
        <name>ATP</name>
        <dbReference type="ChEBI" id="CHEBI:30616"/>
    </ligand>
</feature>
<feature type="binding site" evidence="1">
    <location>
        <position position="188"/>
    </location>
    <ligand>
        <name>[4Fe-4S] cluster</name>
        <dbReference type="ChEBI" id="CHEBI:49883"/>
        <note>ligand shared between dimeric partners</note>
    </ligand>
</feature>
<feature type="binding site" evidence="1">
    <location>
        <position position="191"/>
    </location>
    <ligand>
        <name>[4Fe-4S] cluster</name>
        <dbReference type="ChEBI" id="CHEBI:49883"/>
        <note>ligand shared between dimeric partners</note>
    </ligand>
</feature>
<proteinExistence type="evidence at protein level"/>
<sequence length="260" mass="28250">MLDKVKNVIVVLSGKGGVGKSTVSTQLSLALRKNGFKVGLLDIDLCGPSVPYLLGLEGRDIFQCDDGWVPVYTDESQTLAVMSIGFLLKNREDPVIWRGPKKTMMIRQFLTDVRWDELDYLIIDTPPGTSDEHITVMECLKEVGCHGAIIVTTPQEVALDDVRKEITFCKKTGINILGIVENMSGFVCPHCTSCTNIFSSNGGVSLATYAQVPHLGTLPIDPRVGILAGTTTSVLDELPDSTTAEVLTHIVEKLKTMLVS</sequence>
<comment type="function">
    <text evidence="1">Component of the cytosolic iron-sulfur (Fe/S) protein assembly (CIA) machinery. Required for maturation of extramitochondrial Fe-S proteins. The Nubp1-Nubp2 heterotetramer forms a Fe-S scaffold complex, mediating the de novo assembly of an Fe-S cluster and its transfer to target apoproteins.</text>
</comment>
<comment type="cofactor">
    <cofactor evidence="1">
        <name>[4Fe-4S] cluster</name>
        <dbReference type="ChEBI" id="CHEBI:49883"/>
    </cofactor>
    <text evidence="1">Binds 4 [4Fe-4S] clusters per heterotetramer. Contains two stable clusters in the N-termini of Nubp1 and two labile, bridging clusters between subunits of the Nubp1-Nubp2 heterotetramer.</text>
</comment>
<comment type="subunit">
    <text evidence="1">Heterotetramer of 2 Nubp1 and 2 Nubp2 chains.</text>
</comment>
<comment type="interaction">
    <interactant intactId="EBI-168094">
        <id>Q9VPD2</id>
    </interactant>
    <interactant intactId="EBI-115857">
        <id>Q9VJI9</id>
        <label>Nubp1</label>
    </interactant>
    <organismsDiffer>false</organismsDiffer>
    <experiments>5</experiments>
</comment>
<comment type="subcellular location">
    <subcellularLocation>
        <location evidence="1">Cytoplasm</location>
    </subcellularLocation>
</comment>
<comment type="similarity">
    <text evidence="1">Belongs to the Mrp/NBP35 ATP-binding proteins family. NUBP2/CFD1 subfamily.</text>
</comment>
<organism>
    <name type="scientific">Drosophila melanogaster</name>
    <name type="common">Fruit fly</name>
    <dbReference type="NCBI Taxonomy" id="7227"/>
    <lineage>
        <taxon>Eukaryota</taxon>
        <taxon>Metazoa</taxon>
        <taxon>Ecdysozoa</taxon>
        <taxon>Arthropoda</taxon>
        <taxon>Hexapoda</taxon>
        <taxon>Insecta</taxon>
        <taxon>Pterygota</taxon>
        <taxon>Neoptera</taxon>
        <taxon>Endopterygota</taxon>
        <taxon>Diptera</taxon>
        <taxon>Brachycera</taxon>
        <taxon>Muscomorpha</taxon>
        <taxon>Ephydroidea</taxon>
        <taxon>Drosophilidae</taxon>
        <taxon>Drosophila</taxon>
        <taxon>Sophophora</taxon>
    </lineage>
</organism>
<reference key="1">
    <citation type="journal article" date="2000" name="Science">
        <title>The genome sequence of Drosophila melanogaster.</title>
        <authorList>
            <person name="Adams M.D."/>
            <person name="Celniker S.E."/>
            <person name="Holt R.A."/>
            <person name="Evans C.A."/>
            <person name="Gocayne J.D."/>
            <person name="Amanatides P.G."/>
            <person name="Scherer S.E."/>
            <person name="Li P.W."/>
            <person name="Hoskins R.A."/>
            <person name="Galle R.F."/>
            <person name="George R.A."/>
            <person name="Lewis S.E."/>
            <person name="Richards S."/>
            <person name="Ashburner M."/>
            <person name="Henderson S.N."/>
            <person name="Sutton G.G."/>
            <person name="Wortman J.R."/>
            <person name="Yandell M.D."/>
            <person name="Zhang Q."/>
            <person name="Chen L.X."/>
            <person name="Brandon R.C."/>
            <person name="Rogers Y.-H.C."/>
            <person name="Blazej R.G."/>
            <person name="Champe M."/>
            <person name="Pfeiffer B.D."/>
            <person name="Wan K.H."/>
            <person name="Doyle C."/>
            <person name="Baxter E.G."/>
            <person name="Helt G."/>
            <person name="Nelson C.R."/>
            <person name="Miklos G.L.G."/>
            <person name="Abril J.F."/>
            <person name="Agbayani A."/>
            <person name="An H.-J."/>
            <person name="Andrews-Pfannkoch C."/>
            <person name="Baldwin D."/>
            <person name="Ballew R.M."/>
            <person name="Basu A."/>
            <person name="Baxendale J."/>
            <person name="Bayraktaroglu L."/>
            <person name="Beasley E.M."/>
            <person name="Beeson K.Y."/>
            <person name="Benos P.V."/>
            <person name="Berman B.P."/>
            <person name="Bhandari D."/>
            <person name="Bolshakov S."/>
            <person name="Borkova D."/>
            <person name="Botchan M.R."/>
            <person name="Bouck J."/>
            <person name="Brokstein P."/>
            <person name="Brottier P."/>
            <person name="Burtis K.C."/>
            <person name="Busam D.A."/>
            <person name="Butler H."/>
            <person name="Cadieu E."/>
            <person name="Center A."/>
            <person name="Chandra I."/>
            <person name="Cherry J.M."/>
            <person name="Cawley S."/>
            <person name="Dahlke C."/>
            <person name="Davenport L.B."/>
            <person name="Davies P."/>
            <person name="de Pablos B."/>
            <person name="Delcher A."/>
            <person name="Deng Z."/>
            <person name="Mays A.D."/>
            <person name="Dew I."/>
            <person name="Dietz S.M."/>
            <person name="Dodson K."/>
            <person name="Doup L.E."/>
            <person name="Downes M."/>
            <person name="Dugan-Rocha S."/>
            <person name="Dunkov B.C."/>
            <person name="Dunn P."/>
            <person name="Durbin K.J."/>
            <person name="Evangelista C.C."/>
            <person name="Ferraz C."/>
            <person name="Ferriera S."/>
            <person name="Fleischmann W."/>
            <person name="Fosler C."/>
            <person name="Gabrielian A.E."/>
            <person name="Garg N.S."/>
            <person name="Gelbart W.M."/>
            <person name="Glasser K."/>
            <person name="Glodek A."/>
            <person name="Gong F."/>
            <person name="Gorrell J.H."/>
            <person name="Gu Z."/>
            <person name="Guan P."/>
            <person name="Harris M."/>
            <person name="Harris N.L."/>
            <person name="Harvey D.A."/>
            <person name="Heiman T.J."/>
            <person name="Hernandez J.R."/>
            <person name="Houck J."/>
            <person name="Hostin D."/>
            <person name="Houston K.A."/>
            <person name="Howland T.J."/>
            <person name="Wei M.-H."/>
            <person name="Ibegwam C."/>
            <person name="Jalali M."/>
            <person name="Kalush F."/>
            <person name="Karpen G.H."/>
            <person name="Ke Z."/>
            <person name="Kennison J.A."/>
            <person name="Ketchum K.A."/>
            <person name="Kimmel B.E."/>
            <person name="Kodira C.D."/>
            <person name="Kraft C.L."/>
            <person name="Kravitz S."/>
            <person name="Kulp D."/>
            <person name="Lai Z."/>
            <person name="Lasko P."/>
            <person name="Lei Y."/>
            <person name="Levitsky A.A."/>
            <person name="Li J.H."/>
            <person name="Li Z."/>
            <person name="Liang Y."/>
            <person name="Lin X."/>
            <person name="Liu X."/>
            <person name="Mattei B."/>
            <person name="McIntosh T.C."/>
            <person name="McLeod M.P."/>
            <person name="McPherson D."/>
            <person name="Merkulov G."/>
            <person name="Milshina N.V."/>
            <person name="Mobarry C."/>
            <person name="Morris J."/>
            <person name="Moshrefi A."/>
            <person name="Mount S.M."/>
            <person name="Moy M."/>
            <person name="Murphy B."/>
            <person name="Murphy L."/>
            <person name="Muzny D.M."/>
            <person name="Nelson D.L."/>
            <person name="Nelson D.R."/>
            <person name="Nelson K.A."/>
            <person name="Nixon K."/>
            <person name="Nusskern D.R."/>
            <person name="Pacleb J.M."/>
            <person name="Palazzolo M."/>
            <person name="Pittman G.S."/>
            <person name="Pan S."/>
            <person name="Pollard J."/>
            <person name="Puri V."/>
            <person name="Reese M.G."/>
            <person name="Reinert K."/>
            <person name="Remington K."/>
            <person name="Saunders R.D.C."/>
            <person name="Scheeler F."/>
            <person name="Shen H."/>
            <person name="Shue B.C."/>
            <person name="Siden-Kiamos I."/>
            <person name="Simpson M."/>
            <person name="Skupski M.P."/>
            <person name="Smith T.J."/>
            <person name="Spier E."/>
            <person name="Spradling A.C."/>
            <person name="Stapleton M."/>
            <person name="Strong R."/>
            <person name="Sun E."/>
            <person name="Svirskas R."/>
            <person name="Tector C."/>
            <person name="Turner R."/>
            <person name="Venter E."/>
            <person name="Wang A.H."/>
            <person name="Wang X."/>
            <person name="Wang Z.-Y."/>
            <person name="Wassarman D.A."/>
            <person name="Weinstock G.M."/>
            <person name="Weissenbach J."/>
            <person name="Williams S.M."/>
            <person name="Woodage T."/>
            <person name="Worley K.C."/>
            <person name="Wu D."/>
            <person name="Yang S."/>
            <person name="Yao Q.A."/>
            <person name="Ye J."/>
            <person name="Yeh R.-F."/>
            <person name="Zaveri J.S."/>
            <person name="Zhan M."/>
            <person name="Zhang G."/>
            <person name="Zhao Q."/>
            <person name="Zheng L."/>
            <person name="Zheng X.H."/>
            <person name="Zhong F.N."/>
            <person name="Zhong W."/>
            <person name="Zhou X."/>
            <person name="Zhu S.C."/>
            <person name="Zhu X."/>
            <person name="Smith H.O."/>
            <person name="Gibbs R.A."/>
            <person name="Myers E.W."/>
            <person name="Rubin G.M."/>
            <person name="Venter J.C."/>
        </authorList>
    </citation>
    <scope>NUCLEOTIDE SEQUENCE [LARGE SCALE GENOMIC DNA]</scope>
    <source>
        <strain>Berkeley</strain>
    </source>
</reference>
<reference key="2">
    <citation type="journal article" date="2002" name="Genome Biol.">
        <title>Annotation of the Drosophila melanogaster euchromatic genome: a systematic review.</title>
        <authorList>
            <person name="Misra S."/>
            <person name="Crosby M.A."/>
            <person name="Mungall C.J."/>
            <person name="Matthews B.B."/>
            <person name="Campbell K.S."/>
            <person name="Hradecky P."/>
            <person name="Huang Y."/>
            <person name="Kaminker J.S."/>
            <person name="Millburn G.H."/>
            <person name="Prochnik S.E."/>
            <person name="Smith C.D."/>
            <person name="Tupy J.L."/>
            <person name="Whitfield E.J."/>
            <person name="Bayraktaroglu L."/>
            <person name="Berman B.P."/>
            <person name="Bettencourt B.R."/>
            <person name="Celniker S.E."/>
            <person name="de Grey A.D.N.J."/>
            <person name="Drysdale R.A."/>
            <person name="Harris N.L."/>
            <person name="Richter J."/>
            <person name="Russo S."/>
            <person name="Schroeder A.J."/>
            <person name="Shu S.Q."/>
            <person name="Stapleton M."/>
            <person name="Yamada C."/>
            <person name="Ashburner M."/>
            <person name="Gelbart W.M."/>
            <person name="Rubin G.M."/>
            <person name="Lewis S.E."/>
        </authorList>
    </citation>
    <scope>GENOME REANNOTATION</scope>
    <source>
        <strain>Berkeley</strain>
    </source>
</reference>
<reference key="3">
    <citation type="submission" date="2004-03" db="EMBL/GenBank/DDBJ databases">
        <authorList>
            <person name="Stapleton M."/>
            <person name="Carlson J.W."/>
            <person name="Chavez C."/>
            <person name="Frise E."/>
            <person name="George R.A."/>
            <person name="Pacleb J.M."/>
            <person name="Park S."/>
            <person name="Wan K.H."/>
            <person name="Yu C."/>
            <person name="Rubin G.M."/>
            <person name="Celniker S.E."/>
        </authorList>
    </citation>
    <scope>NUCLEOTIDE SEQUENCE [LARGE SCALE MRNA]</scope>
    <source>
        <strain>Berkeley</strain>
        <tissue>Larva</tissue>
        <tissue>Pupae</tissue>
    </source>
</reference>